<feature type="signal peptide" evidence="2">
    <location>
        <begin position="1"/>
        <end position="21"/>
    </location>
</feature>
<feature type="chain" id="PRO_0000286122" description="Phospholipase B-like protein F">
    <location>
        <begin position="22"/>
        <end position="563"/>
    </location>
</feature>
<feature type="glycosylation site" description="N-linked (GlcNAc...) asparagine" evidence="2">
    <location>
        <position position="85"/>
    </location>
</feature>
<feature type="glycosylation site" description="N-linked (GlcNAc...) asparagine" evidence="2">
    <location>
        <position position="107"/>
    </location>
</feature>
<feature type="glycosylation site" description="N-linked (GlcNAc...) asparagine" evidence="2">
    <location>
        <position position="118"/>
    </location>
</feature>
<feature type="glycosylation site" description="N-linked (GlcNAc...) asparagine" evidence="2">
    <location>
        <position position="121"/>
    </location>
</feature>
<feature type="glycosylation site" description="N-linked (GlcNAc...) asparagine" evidence="2">
    <location>
        <position position="208"/>
    </location>
</feature>
<feature type="glycosylation site" description="N-linked (GlcNAc...) asparagine" evidence="2">
    <location>
        <position position="312"/>
    </location>
</feature>
<feature type="glycosylation site" description="N-linked (GlcNAc...) asparagine" evidence="2">
    <location>
        <position position="537"/>
    </location>
</feature>
<name>PLBLF_DICDI</name>
<comment type="function">
    <text evidence="1">Probable phospholipase.</text>
</comment>
<comment type="subcellular location">
    <subcellularLocation>
        <location evidence="3">Secreted</location>
    </subcellularLocation>
</comment>
<comment type="similarity">
    <text evidence="3">Belongs to the phospholipase B-like family.</text>
</comment>
<gene>
    <name type="primary">plbF</name>
    <name type="ORF">DDB_G0275125</name>
</gene>
<sequence length="563" mass="64528">MKIINSFVFIFVLLFVFNTNAIKLSEDEKYSIEEKPEWYSIDSNFAVSPGKISDALGWGYYKNEILKDGWGKLYVEMNKFMTPENSSIYYEATGYLEGYLTWSTTWNYSQAYFQNYMNGTNESDIPTPLVEFLKINYDWMTSTFSNRDESVYDTQVSNVIYQFEGFARGYQQAADSDKQLTTLQLLLLQYAGDLEDVAGYLEYEMAQNKTEYINRVKSLKEIETLFAVKGRCSGLVRITPDYGELFISHTTWGSYFTAGYRIFKRIIIPDPTVPGNEILFASYAGVLTSDDDFFMIPSTEMVIIETTNDILNTSLYQYVTPNSLLYFVRSIIANRLSNTAQEWTNNFIQYNSGTYSNQWMIVDYKLFTPYQPLQPNTFWIIEQLPGGFMSADMTEVLALGNWPSFNRPFFPEIYDAMGYSYYEKLYGDIISYDLNPRSKMFRRDVPNVMSLDGMQQIMTQNNYKSDPFSGGFPGNAIAARYDLGGGPAEPLSWSFIGLHGAIDSKITSYSLLQQNQAIAINGMTVTPDCPPFTWNSNWSTVSAHYGSPETFDFDWISITITDK</sequence>
<evidence type="ECO:0000250" key="1"/>
<evidence type="ECO:0000255" key="2"/>
<evidence type="ECO:0000305" key="3"/>
<accession>Q554H5</accession>
<accession>Q8T1G1</accession>
<dbReference type="EC" id="3.1.1.-"/>
<dbReference type="EMBL" id="AAFI02000013">
    <property type="protein sequence ID" value="EAL69843.1"/>
    <property type="molecule type" value="Genomic_DNA"/>
</dbReference>
<dbReference type="RefSeq" id="XP_643736.1">
    <property type="nucleotide sequence ID" value="XM_638644.1"/>
</dbReference>
<dbReference type="SMR" id="Q554H5"/>
<dbReference type="FunCoup" id="Q554H5">
    <property type="interactions" value="6"/>
</dbReference>
<dbReference type="STRING" id="44689.Q554H5"/>
<dbReference type="GlyCosmos" id="Q554H5">
    <property type="glycosylation" value="7 sites, No reported glycans"/>
</dbReference>
<dbReference type="GlyGen" id="Q554H5">
    <property type="glycosylation" value="8 sites"/>
</dbReference>
<dbReference type="PaxDb" id="44689-DDB0231381"/>
<dbReference type="EnsemblProtists" id="EAL69843">
    <property type="protein sequence ID" value="EAL69843"/>
    <property type="gene ID" value="DDB_G0275125"/>
</dbReference>
<dbReference type="GeneID" id="8619779"/>
<dbReference type="KEGG" id="ddi:DDB_G0275125"/>
<dbReference type="dictyBase" id="DDB_G0275125">
    <property type="gene designation" value="plbF"/>
</dbReference>
<dbReference type="VEuPathDB" id="AmoebaDB:DDB_G0275125"/>
<dbReference type="eggNOG" id="KOG3774">
    <property type="taxonomic scope" value="Eukaryota"/>
</dbReference>
<dbReference type="HOGENOM" id="CLU_027106_4_0_1"/>
<dbReference type="InParanoid" id="Q554H5"/>
<dbReference type="OMA" id="EGYLTWS"/>
<dbReference type="PhylomeDB" id="Q554H5"/>
<dbReference type="PRO" id="PR:Q554H5"/>
<dbReference type="Proteomes" id="UP000002195">
    <property type="component" value="Chromosome 2"/>
</dbReference>
<dbReference type="GO" id="GO:0005576">
    <property type="term" value="C:extracellular region"/>
    <property type="evidence" value="ECO:0000318"/>
    <property type="project" value="GO_Central"/>
</dbReference>
<dbReference type="GO" id="GO:0004620">
    <property type="term" value="F:phospholipase activity"/>
    <property type="evidence" value="ECO:0000250"/>
    <property type="project" value="dictyBase"/>
</dbReference>
<dbReference type="GO" id="GO:0046338">
    <property type="term" value="P:phosphatidylethanolamine catabolic process"/>
    <property type="evidence" value="ECO:0000250"/>
    <property type="project" value="dictyBase"/>
</dbReference>
<dbReference type="GO" id="GO:0031161">
    <property type="term" value="P:phosphatidylinositol catabolic process"/>
    <property type="evidence" value="ECO:0000250"/>
    <property type="project" value="dictyBase"/>
</dbReference>
<dbReference type="GO" id="GO:0009395">
    <property type="term" value="P:phospholipid catabolic process"/>
    <property type="evidence" value="ECO:0000250"/>
    <property type="project" value="dictyBase"/>
</dbReference>
<dbReference type="FunFam" id="3.60.60.30:FF:000001">
    <property type="entry name" value="Phospholipase B-like protein G"/>
    <property type="match status" value="1"/>
</dbReference>
<dbReference type="Gene3D" id="3.60.60.30">
    <property type="match status" value="1"/>
</dbReference>
<dbReference type="InterPro" id="IPR007000">
    <property type="entry name" value="PLipase_B-like"/>
</dbReference>
<dbReference type="PANTHER" id="PTHR12370:SF2">
    <property type="entry name" value="PHOSPHOLIPASE B-LIKE PROTEIN F"/>
    <property type="match status" value="1"/>
</dbReference>
<dbReference type="PANTHER" id="PTHR12370">
    <property type="entry name" value="PHOSPHOLIPASE B-RELATED"/>
    <property type="match status" value="1"/>
</dbReference>
<dbReference type="Pfam" id="PF04916">
    <property type="entry name" value="Phospholip_B"/>
    <property type="match status" value="1"/>
</dbReference>
<organism>
    <name type="scientific">Dictyostelium discoideum</name>
    <name type="common">Social amoeba</name>
    <dbReference type="NCBI Taxonomy" id="44689"/>
    <lineage>
        <taxon>Eukaryota</taxon>
        <taxon>Amoebozoa</taxon>
        <taxon>Evosea</taxon>
        <taxon>Eumycetozoa</taxon>
        <taxon>Dictyostelia</taxon>
        <taxon>Dictyosteliales</taxon>
        <taxon>Dictyosteliaceae</taxon>
        <taxon>Dictyostelium</taxon>
    </lineage>
</organism>
<reference key="1">
    <citation type="journal article" date="2002" name="Nature">
        <title>Sequence and analysis of chromosome 2 of Dictyostelium discoideum.</title>
        <authorList>
            <person name="Gloeckner G."/>
            <person name="Eichinger L."/>
            <person name="Szafranski K."/>
            <person name="Pachebat J.A."/>
            <person name="Bankier A.T."/>
            <person name="Dear P.H."/>
            <person name="Lehmann R."/>
            <person name="Baumgart C."/>
            <person name="Parra G."/>
            <person name="Abril J.F."/>
            <person name="Guigo R."/>
            <person name="Kumpf K."/>
            <person name="Tunggal B."/>
            <person name="Cox E.C."/>
            <person name="Quail M.A."/>
            <person name="Platzer M."/>
            <person name="Rosenthal A."/>
            <person name="Noegel A.A."/>
        </authorList>
    </citation>
    <scope>NUCLEOTIDE SEQUENCE [LARGE SCALE GENOMIC DNA]</scope>
    <source>
        <strain>AX4</strain>
    </source>
</reference>
<reference key="2">
    <citation type="journal article" date="2005" name="Nature">
        <title>The genome of the social amoeba Dictyostelium discoideum.</title>
        <authorList>
            <person name="Eichinger L."/>
            <person name="Pachebat J.A."/>
            <person name="Gloeckner G."/>
            <person name="Rajandream M.A."/>
            <person name="Sucgang R."/>
            <person name="Berriman M."/>
            <person name="Song J."/>
            <person name="Olsen R."/>
            <person name="Szafranski K."/>
            <person name="Xu Q."/>
            <person name="Tunggal B."/>
            <person name="Kummerfeld S."/>
            <person name="Madera M."/>
            <person name="Konfortov B.A."/>
            <person name="Rivero F."/>
            <person name="Bankier A.T."/>
            <person name="Lehmann R."/>
            <person name="Hamlin N."/>
            <person name="Davies R."/>
            <person name="Gaudet P."/>
            <person name="Fey P."/>
            <person name="Pilcher K."/>
            <person name="Chen G."/>
            <person name="Saunders D."/>
            <person name="Sodergren E.J."/>
            <person name="Davis P."/>
            <person name="Kerhornou A."/>
            <person name="Nie X."/>
            <person name="Hall N."/>
            <person name="Anjard C."/>
            <person name="Hemphill L."/>
            <person name="Bason N."/>
            <person name="Farbrother P."/>
            <person name="Desany B."/>
            <person name="Just E."/>
            <person name="Morio T."/>
            <person name="Rost R."/>
            <person name="Churcher C.M."/>
            <person name="Cooper J."/>
            <person name="Haydock S."/>
            <person name="van Driessche N."/>
            <person name="Cronin A."/>
            <person name="Goodhead I."/>
            <person name="Muzny D.M."/>
            <person name="Mourier T."/>
            <person name="Pain A."/>
            <person name="Lu M."/>
            <person name="Harper D."/>
            <person name="Lindsay R."/>
            <person name="Hauser H."/>
            <person name="James K.D."/>
            <person name="Quiles M."/>
            <person name="Madan Babu M."/>
            <person name="Saito T."/>
            <person name="Buchrieser C."/>
            <person name="Wardroper A."/>
            <person name="Felder M."/>
            <person name="Thangavelu M."/>
            <person name="Johnson D."/>
            <person name="Knights A."/>
            <person name="Loulseged H."/>
            <person name="Mungall K.L."/>
            <person name="Oliver K."/>
            <person name="Price C."/>
            <person name="Quail M.A."/>
            <person name="Urushihara H."/>
            <person name="Hernandez J."/>
            <person name="Rabbinowitsch E."/>
            <person name="Steffen D."/>
            <person name="Sanders M."/>
            <person name="Ma J."/>
            <person name="Kohara Y."/>
            <person name="Sharp S."/>
            <person name="Simmonds M.N."/>
            <person name="Spiegler S."/>
            <person name="Tivey A."/>
            <person name="Sugano S."/>
            <person name="White B."/>
            <person name="Walker D."/>
            <person name="Woodward J.R."/>
            <person name="Winckler T."/>
            <person name="Tanaka Y."/>
            <person name="Shaulsky G."/>
            <person name="Schleicher M."/>
            <person name="Weinstock G.M."/>
            <person name="Rosenthal A."/>
            <person name="Cox E.C."/>
            <person name="Chisholm R.L."/>
            <person name="Gibbs R.A."/>
            <person name="Loomis W.F."/>
            <person name="Platzer M."/>
            <person name="Kay R.R."/>
            <person name="Williams J.G."/>
            <person name="Dear P.H."/>
            <person name="Noegel A.A."/>
            <person name="Barrell B.G."/>
            <person name="Kuspa A."/>
        </authorList>
    </citation>
    <scope>NUCLEOTIDE SEQUENCE [LARGE SCALE GENOMIC DNA]</scope>
    <source>
        <strain>AX4</strain>
    </source>
</reference>
<protein>
    <recommendedName>
        <fullName>Phospholipase B-like protein F</fullName>
        <ecNumber>3.1.1.-</ecNumber>
    </recommendedName>
</protein>
<proteinExistence type="inferred from homology"/>
<keyword id="KW-0325">Glycoprotein</keyword>
<keyword id="KW-0378">Hydrolase</keyword>
<keyword id="KW-0442">Lipid degradation</keyword>
<keyword id="KW-0443">Lipid metabolism</keyword>
<keyword id="KW-1185">Reference proteome</keyword>
<keyword id="KW-0964">Secreted</keyword>
<keyword id="KW-0732">Signal</keyword>